<keyword id="KW-0012">Acyltransferase</keyword>
<keyword id="KW-0028">Amino-acid biosynthesis</keyword>
<keyword id="KW-0055">Arginine biosynthesis</keyword>
<keyword id="KW-0068">Autocatalytic cleavage</keyword>
<keyword id="KW-0963">Cytoplasm</keyword>
<keyword id="KW-0511">Multifunctional enzyme</keyword>
<keyword id="KW-1185">Reference proteome</keyword>
<keyword id="KW-0808">Transferase</keyword>
<sequence>MTTTDSGTGKLVRTQGVTAPLGFRAAGIAAGIKASGKPDLALVFNEGPEYAAAGVFTRNKVKAAPVLWSQQVLTSRRLRAVILNSGGANACTGPEGFQDTHRTAEELARALSNWGTETGAGEIAVCSTGLIGDRLPMDKLIPAVTEIVHEMGGGLSGGTDAAHAIMTTDTVPKEAAFHHRDKWNVGGMAKGAGMLAPSLATMLVVLTTDAAVTAEQLDTALRKATRLTFDRLDVDGSCSTNDTVLLLANGASEVTPSQEELEAAVFAVCDDLAAQLMADAEGVTKRVRVTVTGAANEDEAVTAARAIARDSLVKTALFGSDPNWGRVLAAVGIAPITLDPDRISVSFNGNPVCVNGVGAPGARQVDLSGADIDVLVELNVGDGEAMIRTTDLSHGYVEENSAYSS</sequence>
<feature type="chain" id="PRO_0000227240" description="Arginine biosynthesis bifunctional protein ArgJ alpha chain" evidence="1">
    <location>
        <begin position="1"/>
        <end position="200"/>
    </location>
</feature>
<feature type="chain" id="PRO_0000227241" description="Arginine biosynthesis bifunctional protein ArgJ beta chain" evidence="1">
    <location>
        <begin position="201"/>
        <end position="405"/>
    </location>
</feature>
<feature type="active site" description="Nucleophile" evidence="1">
    <location>
        <position position="201"/>
    </location>
</feature>
<feature type="binding site" evidence="1">
    <location>
        <position position="167"/>
    </location>
    <ligand>
        <name>substrate</name>
    </ligand>
</feature>
<feature type="binding site" evidence="1">
    <location>
        <position position="190"/>
    </location>
    <ligand>
        <name>substrate</name>
    </ligand>
</feature>
<feature type="binding site" evidence="1">
    <location>
        <position position="201"/>
    </location>
    <ligand>
        <name>substrate</name>
    </ligand>
</feature>
<feature type="binding site" evidence="1">
    <location>
        <position position="281"/>
    </location>
    <ligand>
        <name>substrate</name>
    </ligand>
</feature>
<feature type="binding site" evidence="1">
    <location>
        <position position="400"/>
    </location>
    <ligand>
        <name>substrate</name>
    </ligand>
</feature>
<feature type="binding site" evidence="1">
    <location>
        <position position="405"/>
    </location>
    <ligand>
        <name>substrate</name>
    </ligand>
</feature>
<feature type="site" description="Involved in the stabilization of negative charge on the oxyanion by the formation of the oxyanion hole" evidence="1">
    <location>
        <position position="128"/>
    </location>
</feature>
<feature type="site" description="Involved in the stabilization of negative charge on the oxyanion by the formation of the oxyanion hole" evidence="1">
    <location>
        <position position="129"/>
    </location>
</feature>
<feature type="site" description="Cleavage; by autolysis" evidence="1">
    <location>
        <begin position="200"/>
        <end position="201"/>
    </location>
</feature>
<name>ARGJ_NOCFA</name>
<gene>
    <name evidence="1" type="primary">argJ</name>
    <name type="ordered locus">NFA_19370</name>
</gene>
<evidence type="ECO:0000255" key="1">
    <source>
        <dbReference type="HAMAP-Rule" id="MF_01106"/>
    </source>
</evidence>
<organism>
    <name type="scientific">Nocardia farcinica (strain IFM 10152)</name>
    <dbReference type="NCBI Taxonomy" id="247156"/>
    <lineage>
        <taxon>Bacteria</taxon>
        <taxon>Bacillati</taxon>
        <taxon>Actinomycetota</taxon>
        <taxon>Actinomycetes</taxon>
        <taxon>Mycobacteriales</taxon>
        <taxon>Nocardiaceae</taxon>
        <taxon>Nocardia</taxon>
    </lineage>
</organism>
<accession>Q5YYF8</accession>
<dbReference type="EC" id="2.3.1.35" evidence="1"/>
<dbReference type="EC" id="2.3.1.1" evidence="1"/>
<dbReference type="EMBL" id="AP006618">
    <property type="protein sequence ID" value="BAD56783.1"/>
    <property type="molecule type" value="Genomic_DNA"/>
</dbReference>
<dbReference type="RefSeq" id="WP_011208468.1">
    <property type="nucleotide sequence ID" value="NC_006361.1"/>
</dbReference>
<dbReference type="SMR" id="Q5YYF8"/>
<dbReference type="STRING" id="247156.NFA_19370"/>
<dbReference type="GeneID" id="61132719"/>
<dbReference type="KEGG" id="nfa:NFA_19370"/>
<dbReference type="eggNOG" id="COG1364">
    <property type="taxonomic scope" value="Bacteria"/>
</dbReference>
<dbReference type="HOGENOM" id="CLU_027172_2_0_11"/>
<dbReference type="OrthoDB" id="9804242at2"/>
<dbReference type="UniPathway" id="UPA00068">
    <property type="reaction ID" value="UER00106"/>
</dbReference>
<dbReference type="UniPathway" id="UPA00068">
    <property type="reaction ID" value="UER00111"/>
</dbReference>
<dbReference type="Proteomes" id="UP000006820">
    <property type="component" value="Chromosome"/>
</dbReference>
<dbReference type="GO" id="GO:0005737">
    <property type="term" value="C:cytoplasm"/>
    <property type="evidence" value="ECO:0007669"/>
    <property type="project" value="UniProtKB-SubCell"/>
</dbReference>
<dbReference type="GO" id="GO:0004358">
    <property type="term" value="F:glutamate N-acetyltransferase activity"/>
    <property type="evidence" value="ECO:0007669"/>
    <property type="project" value="UniProtKB-UniRule"/>
</dbReference>
<dbReference type="GO" id="GO:0004042">
    <property type="term" value="F:L-glutamate N-acetyltransferase activity"/>
    <property type="evidence" value="ECO:0007669"/>
    <property type="project" value="UniProtKB-UniRule"/>
</dbReference>
<dbReference type="GO" id="GO:0006526">
    <property type="term" value="P:L-arginine biosynthetic process"/>
    <property type="evidence" value="ECO:0007669"/>
    <property type="project" value="UniProtKB-UniRule"/>
</dbReference>
<dbReference type="GO" id="GO:0006592">
    <property type="term" value="P:ornithine biosynthetic process"/>
    <property type="evidence" value="ECO:0007669"/>
    <property type="project" value="TreeGrafter"/>
</dbReference>
<dbReference type="CDD" id="cd02152">
    <property type="entry name" value="OAT"/>
    <property type="match status" value="1"/>
</dbReference>
<dbReference type="FunFam" id="3.10.20.340:FF:000005">
    <property type="entry name" value="Arginine biosynthesis bifunctional protein ArgJ"/>
    <property type="match status" value="1"/>
</dbReference>
<dbReference type="Gene3D" id="3.30.2330.10">
    <property type="entry name" value="arginine biosynthesis bifunctional protein suprefamily"/>
    <property type="match status" value="1"/>
</dbReference>
<dbReference type="Gene3D" id="3.10.20.340">
    <property type="entry name" value="ArgJ beta chain, C-terminal domain"/>
    <property type="match status" value="1"/>
</dbReference>
<dbReference type="Gene3D" id="3.60.70.12">
    <property type="entry name" value="L-amino peptidase D-ALA esterase/amidase"/>
    <property type="match status" value="1"/>
</dbReference>
<dbReference type="HAMAP" id="MF_01106">
    <property type="entry name" value="ArgJ"/>
    <property type="match status" value="1"/>
</dbReference>
<dbReference type="InterPro" id="IPR002813">
    <property type="entry name" value="Arg_biosynth_ArgJ"/>
</dbReference>
<dbReference type="InterPro" id="IPR016117">
    <property type="entry name" value="ArgJ-like_dom_sf"/>
</dbReference>
<dbReference type="InterPro" id="IPR042195">
    <property type="entry name" value="ArgJ_beta_C"/>
</dbReference>
<dbReference type="NCBIfam" id="TIGR00120">
    <property type="entry name" value="ArgJ"/>
    <property type="match status" value="1"/>
</dbReference>
<dbReference type="NCBIfam" id="NF003802">
    <property type="entry name" value="PRK05388.1"/>
    <property type="match status" value="1"/>
</dbReference>
<dbReference type="PANTHER" id="PTHR23100">
    <property type="entry name" value="ARGININE BIOSYNTHESIS BIFUNCTIONAL PROTEIN ARGJ"/>
    <property type="match status" value="1"/>
</dbReference>
<dbReference type="PANTHER" id="PTHR23100:SF0">
    <property type="entry name" value="ARGININE BIOSYNTHESIS BIFUNCTIONAL PROTEIN ARGJ, MITOCHONDRIAL"/>
    <property type="match status" value="1"/>
</dbReference>
<dbReference type="Pfam" id="PF01960">
    <property type="entry name" value="ArgJ"/>
    <property type="match status" value="1"/>
</dbReference>
<dbReference type="SUPFAM" id="SSF56266">
    <property type="entry name" value="DmpA/ArgJ-like"/>
    <property type="match status" value="1"/>
</dbReference>
<protein>
    <recommendedName>
        <fullName evidence="1">Arginine biosynthesis bifunctional protein ArgJ</fullName>
    </recommendedName>
    <domain>
        <recommendedName>
            <fullName evidence="1">Glutamate N-acetyltransferase</fullName>
            <ecNumber evidence="1">2.3.1.35</ecNumber>
        </recommendedName>
        <alternativeName>
            <fullName evidence="1">Ornithine acetyltransferase</fullName>
            <shortName evidence="1">OATase</shortName>
        </alternativeName>
        <alternativeName>
            <fullName evidence="1">Ornithine transacetylase</fullName>
        </alternativeName>
    </domain>
    <domain>
        <recommendedName>
            <fullName evidence="1">Amino-acid acetyltransferase</fullName>
            <ecNumber evidence="1">2.3.1.1</ecNumber>
        </recommendedName>
        <alternativeName>
            <fullName evidence="1">N-acetylglutamate synthase</fullName>
            <shortName evidence="1">AGSase</shortName>
        </alternativeName>
    </domain>
    <component>
        <recommendedName>
            <fullName evidence="1">Arginine biosynthesis bifunctional protein ArgJ alpha chain</fullName>
        </recommendedName>
    </component>
    <component>
        <recommendedName>
            <fullName evidence="1">Arginine biosynthesis bifunctional protein ArgJ beta chain</fullName>
        </recommendedName>
    </component>
</protein>
<proteinExistence type="inferred from homology"/>
<reference key="1">
    <citation type="journal article" date="2004" name="Proc. Natl. Acad. Sci. U.S.A.">
        <title>The complete genomic sequence of Nocardia farcinica IFM 10152.</title>
        <authorList>
            <person name="Ishikawa J."/>
            <person name="Yamashita A."/>
            <person name="Mikami Y."/>
            <person name="Hoshino Y."/>
            <person name="Kurita H."/>
            <person name="Hotta K."/>
            <person name="Shiba T."/>
            <person name="Hattori M."/>
        </authorList>
    </citation>
    <scope>NUCLEOTIDE SEQUENCE [LARGE SCALE GENOMIC DNA]</scope>
    <source>
        <strain>IFM 10152</strain>
    </source>
</reference>
<comment type="function">
    <text evidence="1">Catalyzes two activities which are involved in the cyclic version of arginine biosynthesis: the synthesis of N-acetylglutamate from glutamate and acetyl-CoA as the acetyl donor, and of ornithine by transacetylation between N(2)-acetylornithine and glutamate.</text>
</comment>
<comment type="catalytic activity">
    <reaction evidence="1">
        <text>N(2)-acetyl-L-ornithine + L-glutamate = N-acetyl-L-glutamate + L-ornithine</text>
        <dbReference type="Rhea" id="RHEA:15349"/>
        <dbReference type="ChEBI" id="CHEBI:29985"/>
        <dbReference type="ChEBI" id="CHEBI:44337"/>
        <dbReference type="ChEBI" id="CHEBI:46911"/>
        <dbReference type="ChEBI" id="CHEBI:57805"/>
        <dbReference type="EC" id="2.3.1.35"/>
    </reaction>
</comment>
<comment type="catalytic activity">
    <reaction evidence="1">
        <text>L-glutamate + acetyl-CoA = N-acetyl-L-glutamate + CoA + H(+)</text>
        <dbReference type="Rhea" id="RHEA:24292"/>
        <dbReference type="ChEBI" id="CHEBI:15378"/>
        <dbReference type="ChEBI" id="CHEBI:29985"/>
        <dbReference type="ChEBI" id="CHEBI:44337"/>
        <dbReference type="ChEBI" id="CHEBI:57287"/>
        <dbReference type="ChEBI" id="CHEBI:57288"/>
        <dbReference type="EC" id="2.3.1.1"/>
    </reaction>
</comment>
<comment type="pathway">
    <text evidence="1">Amino-acid biosynthesis; L-arginine biosynthesis; L-ornithine and N-acetyl-L-glutamate from L-glutamate and N(2)-acetyl-L-ornithine (cyclic): step 1/1.</text>
</comment>
<comment type="pathway">
    <text evidence="1">Amino-acid biosynthesis; L-arginine biosynthesis; N(2)-acetyl-L-ornithine from L-glutamate: step 1/4.</text>
</comment>
<comment type="subunit">
    <text evidence="1">Heterotetramer of two alpha and two beta chains.</text>
</comment>
<comment type="subcellular location">
    <subcellularLocation>
        <location evidence="1">Cytoplasm</location>
    </subcellularLocation>
</comment>
<comment type="similarity">
    <text evidence="1">Belongs to the ArgJ family.</text>
</comment>